<proteinExistence type="evidence at transcript level"/>
<feature type="chain" id="PRO_0000153731" description="Dispanin subfamily A member 2b">
    <location>
        <begin position="1"/>
        <end position="107"/>
    </location>
</feature>
<feature type="topological domain" description="Extracellular" evidence="2">
    <location>
        <begin position="1"/>
        <end position="31"/>
    </location>
</feature>
<feature type="transmembrane region" description="Helical" evidence="2">
    <location>
        <begin position="32"/>
        <end position="52"/>
    </location>
</feature>
<feature type="topological domain" description="Cytoplasmic" evidence="2">
    <location>
        <begin position="53"/>
        <end position="77"/>
    </location>
</feature>
<feature type="transmembrane region" description="Helical" evidence="2">
    <location>
        <begin position="78"/>
        <end position="98"/>
    </location>
</feature>
<feature type="topological domain" description="Extracellular" evidence="2">
    <location>
        <begin position="99"/>
        <end position="107"/>
    </location>
</feature>
<feature type="lipid moiety-binding region" description="S-palmitoyl cysteine" evidence="1">
    <location>
        <position position="41"/>
    </location>
</feature>
<feature type="lipid moiety-binding region" description="S-palmitoyl cysteine" evidence="1">
    <location>
        <position position="42"/>
    </location>
</feature>
<sequence>MEYRTDQVPMSPRSVQGAPGTLPIRDHLPWSIFNLFYMNVCCLGLTAMIFSVKSRDRKVVGDVEGARHYGSTARSLNIAATVLGILLIIILIGLAATGTIQALKYKG</sequence>
<comment type="subcellular location">
    <subcellularLocation>
        <location evidence="1">Cell membrane</location>
        <topology evidence="1">Multi-pass membrane protein</topology>
    </subcellularLocation>
</comment>
<comment type="tissue specificity">
    <text evidence="3">Expressed various cell types in torpedo electric organ and muscle, especially fibroblasts, capillary endothelial cells, and axonal cuff cells.</text>
</comment>
<comment type="similarity">
    <text evidence="4">Belongs to the CD225/Dispanin family.</text>
</comment>
<accession>Q91499</accession>
<name>DSA2B_TORMA</name>
<organism>
    <name type="scientific">Torpedo marmorata</name>
    <name type="common">Marbled electric ray</name>
    <dbReference type="NCBI Taxonomy" id="7788"/>
    <lineage>
        <taxon>Eukaryota</taxon>
        <taxon>Metazoa</taxon>
        <taxon>Chordata</taxon>
        <taxon>Craniata</taxon>
        <taxon>Vertebrata</taxon>
        <taxon>Chondrichthyes</taxon>
        <taxon>Elasmobranchii</taxon>
        <taxon>Batoidea</taxon>
        <taxon>Torpediniformes</taxon>
        <taxon>Torpedinidae</taxon>
        <taxon>Torpedo</taxon>
    </lineage>
</organism>
<dbReference type="EMBL" id="U16697">
    <property type="protein sequence ID" value="AAC59660.1"/>
    <property type="molecule type" value="mRNA"/>
</dbReference>
<dbReference type="TCDB" id="8.A.58.1.5">
    <property type="family name" value="the dispanin (dispanin) family"/>
</dbReference>
<dbReference type="GO" id="GO:0005886">
    <property type="term" value="C:plasma membrane"/>
    <property type="evidence" value="ECO:0007669"/>
    <property type="project" value="UniProtKB-SubCell"/>
</dbReference>
<dbReference type="InterPro" id="IPR007593">
    <property type="entry name" value="CD225/Dispanin_fam"/>
</dbReference>
<dbReference type="InterPro" id="IPR051517">
    <property type="entry name" value="IFITM_antiviral_protein"/>
</dbReference>
<dbReference type="PANTHER" id="PTHR13999">
    <property type="entry name" value="INTERFERON INDUCIBLE TRANSMEMBRANE PROTEIN"/>
    <property type="match status" value="1"/>
</dbReference>
<dbReference type="PANTHER" id="PTHR13999:SF4">
    <property type="entry name" value="INTERFERON-INDUCED TRANSMEMBRANE PROTEIN 3"/>
    <property type="match status" value="1"/>
</dbReference>
<dbReference type="Pfam" id="PF04505">
    <property type="entry name" value="CD225"/>
    <property type="match status" value="1"/>
</dbReference>
<protein>
    <recommendedName>
        <fullName>Dispanin subfamily A member 2b</fullName>
        <shortName>DSPA2b</shortName>
    </recommendedName>
    <alternativeName>
        <fullName>14 kDa transmembrane protein</fullName>
    </alternativeName>
</protein>
<keyword id="KW-1003">Cell membrane</keyword>
<keyword id="KW-0449">Lipoprotein</keyword>
<keyword id="KW-0472">Membrane</keyword>
<keyword id="KW-0564">Palmitate</keyword>
<keyword id="KW-0812">Transmembrane</keyword>
<keyword id="KW-1133">Transmembrane helix</keyword>
<evidence type="ECO:0000250" key="1"/>
<evidence type="ECO:0000255" key="2"/>
<evidence type="ECO:0000269" key="3">
    <source>
    </source>
</evidence>
<evidence type="ECO:0000305" key="4"/>
<reference key="1">
    <citation type="submission" date="1994-11" db="EMBL/GenBank/DDBJ databases">
        <authorList>
            <person name="Meunier F.-M."/>
            <person name="Birman S."/>
            <person name="O'Regan S."/>
            <person name="Leroy C."/>
            <person name="Morel N."/>
            <person name="Brochier G."/>
            <person name="Varoqui H."/>
            <person name="Lesbats B."/>
            <person name="Le Caer J.-P."/>
            <person name="Rossier J."/>
            <person name="Israel M."/>
        </authorList>
    </citation>
    <scope>NUCLEOTIDE SEQUENCE [MRNA]</scope>
    <source>
        <tissue>Liver</tissue>
    </source>
</reference>
<reference key="2">
    <citation type="journal article" date="1991" name="J. Cell Sci.">
        <title>Immunological identification of a new 14X10(3) Mr membrane-bound protein in Torpedo electric organ.</title>
        <authorList>
            <person name="Morel N."/>
            <person name="Brochier G."/>
            <person name="Synguelakis M."/>
            <person name="Le Gal La Salle G."/>
        </authorList>
    </citation>
    <scope>TISSUE SPECIFICITY</scope>
</reference>
<reference key="3">
    <citation type="journal article" date="2012" name="PLoS ONE">
        <title>The dispanins: a novel gene family of ancient origin that contains 14 human members.</title>
        <authorList>
            <person name="Sallman Almen M."/>
            <person name="Bringeland N."/>
            <person name="Fredriksson R."/>
            <person name="Schioth H.B."/>
        </authorList>
    </citation>
    <scope>GENE FAMILY</scope>
</reference>